<accession>Q7A695</accession>
<name>PURK_STAAN</name>
<gene>
    <name evidence="1" type="primary">purK</name>
    <name type="ordered locus">SA0917</name>
</gene>
<protein>
    <recommendedName>
        <fullName evidence="1">N5-carboxyaminoimidazole ribonucleotide synthase</fullName>
        <shortName evidence="1">N5-CAIR synthase</shortName>
        <ecNumber evidence="1">6.3.4.18</ecNumber>
    </recommendedName>
    <alternativeName>
        <fullName evidence="1">5-(carboxyamino)imidazole ribonucleotide synthetase</fullName>
    </alternativeName>
</protein>
<comment type="function">
    <text evidence="1">Catalyzes the ATP-dependent conversion of 5-aminoimidazole ribonucleotide (AIR) and HCO(3)(-) to N5-carboxyaminoimidazole ribonucleotide (N5-CAIR).</text>
</comment>
<comment type="catalytic activity">
    <reaction evidence="1">
        <text>5-amino-1-(5-phospho-beta-D-ribosyl)imidazole + hydrogencarbonate + ATP = 5-carboxyamino-1-(5-phospho-D-ribosyl)imidazole + ADP + phosphate + 2 H(+)</text>
        <dbReference type="Rhea" id="RHEA:19317"/>
        <dbReference type="ChEBI" id="CHEBI:15378"/>
        <dbReference type="ChEBI" id="CHEBI:17544"/>
        <dbReference type="ChEBI" id="CHEBI:30616"/>
        <dbReference type="ChEBI" id="CHEBI:43474"/>
        <dbReference type="ChEBI" id="CHEBI:58730"/>
        <dbReference type="ChEBI" id="CHEBI:137981"/>
        <dbReference type="ChEBI" id="CHEBI:456216"/>
        <dbReference type="EC" id="6.3.4.18"/>
    </reaction>
</comment>
<comment type="pathway">
    <text evidence="1">Purine metabolism; IMP biosynthesis via de novo pathway; 5-amino-1-(5-phospho-D-ribosyl)imidazole-4-carboxylate from 5-amino-1-(5-phospho-D-ribosyl)imidazole (N5-CAIR route): step 1/2.</text>
</comment>
<comment type="subunit">
    <text evidence="1">Homodimer.</text>
</comment>
<comment type="similarity">
    <text evidence="1">Belongs to the PurK/PurT family.</text>
</comment>
<feature type="chain" id="PRO_0000075005" description="N5-carboxyaminoimidazole ribonucleotide synthase">
    <location>
        <begin position="1"/>
        <end position="374"/>
    </location>
</feature>
<feature type="domain" description="ATP-grasp" evidence="1">
    <location>
        <begin position="112"/>
        <end position="296"/>
    </location>
</feature>
<feature type="binding site" evidence="1">
    <location>
        <position position="108"/>
    </location>
    <ligand>
        <name>ATP</name>
        <dbReference type="ChEBI" id="CHEBI:30616"/>
    </ligand>
</feature>
<feature type="binding site" evidence="1">
    <location>
        <position position="148"/>
    </location>
    <ligand>
        <name>ATP</name>
        <dbReference type="ChEBI" id="CHEBI:30616"/>
    </ligand>
</feature>
<feature type="binding site" evidence="1">
    <location>
        <begin position="153"/>
        <end position="159"/>
    </location>
    <ligand>
        <name>ATP</name>
        <dbReference type="ChEBI" id="CHEBI:30616"/>
    </ligand>
</feature>
<feature type="binding site" evidence="1">
    <location>
        <begin position="183"/>
        <end position="186"/>
    </location>
    <ligand>
        <name>ATP</name>
        <dbReference type="ChEBI" id="CHEBI:30616"/>
    </ligand>
</feature>
<feature type="binding site" evidence="1">
    <location>
        <position position="191"/>
    </location>
    <ligand>
        <name>ATP</name>
        <dbReference type="ChEBI" id="CHEBI:30616"/>
    </ligand>
</feature>
<feature type="binding site" evidence="1">
    <location>
        <position position="214"/>
    </location>
    <ligand>
        <name>ATP</name>
        <dbReference type="ChEBI" id="CHEBI:30616"/>
    </ligand>
</feature>
<feature type="binding site" evidence="1">
    <location>
        <begin position="266"/>
        <end position="267"/>
    </location>
    <ligand>
        <name>ATP</name>
        <dbReference type="ChEBI" id="CHEBI:30616"/>
    </ligand>
</feature>
<sequence>MNFNKLKFGATIGIIGGGQLGKMMAQSAQKMGYKVVVLDPSEDCPCRYVAHEFIQAKYDDEKALNQLGQKCDVITYEFENISAQQLKLLCEKYNIPQGYQAIQLLQDRLTEKETLKSAGTKVVPFISVKESTDIDKAIETLGYPFIVKTRFGGYDGKGQVLINNEKDLQEGFKLIETSECVAEKYLNIKKEVSLTVTRGNNNQITFFPLQENEHRNQILFKTIVPARIDKTAEAKEQVNKIIQSIHFIGTFTVEFFIDSNNQLYVNEIAPRPHNSGHYSIEACDYSQFDTHILAVTGQSLPNSIELLKPAVMMNLLGKDLDLLENEFNEHPEWHLHIYGKSGRKDSRKMGHMTVLTNDVNQTEQDMYAKFEGSN</sequence>
<keyword id="KW-0067">ATP-binding</keyword>
<keyword id="KW-0436">Ligase</keyword>
<keyword id="KW-0547">Nucleotide-binding</keyword>
<keyword id="KW-0658">Purine biosynthesis</keyword>
<dbReference type="EC" id="6.3.4.18" evidence="1"/>
<dbReference type="EMBL" id="BA000018">
    <property type="protein sequence ID" value="BAB42162.1"/>
    <property type="molecule type" value="Genomic_DNA"/>
</dbReference>
<dbReference type="PIR" id="G89875">
    <property type="entry name" value="G89875"/>
</dbReference>
<dbReference type="RefSeq" id="WP_001010413.1">
    <property type="nucleotide sequence ID" value="NC_002745.2"/>
</dbReference>
<dbReference type="SMR" id="Q7A695"/>
<dbReference type="EnsemblBacteria" id="BAB42162">
    <property type="protein sequence ID" value="BAB42162"/>
    <property type="gene ID" value="BAB42162"/>
</dbReference>
<dbReference type="KEGG" id="sau:SA0917"/>
<dbReference type="HOGENOM" id="CLU_011534_0_1_9"/>
<dbReference type="UniPathway" id="UPA00074">
    <property type="reaction ID" value="UER00942"/>
</dbReference>
<dbReference type="GO" id="GO:0005829">
    <property type="term" value="C:cytosol"/>
    <property type="evidence" value="ECO:0007669"/>
    <property type="project" value="TreeGrafter"/>
</dbReference>
<dbReference type="GO" id="GO:0034028">
    <property type="term" value="F:5-(carboxyamino)imidazole ribonucleotide synthase activity"/>
    <property type="evidence" value="ECO:0007669"/>
    <property type="project" value="UniProtKB-UniRule"/>
</dbReference>
<dbReference type="GO" id="GO:0005524">
    <property type="term" value="F:ATP binding"/>
    <property type="evidence" value="ECO:0007669"/>
    <property type="project" value="UniProtKB-KW"/>
</dbReference>
<dbReference type="GO" id="GO:0046872">
    <property type="term" value="F:metal ion binding"/>
    <property type="evidence" value="ECO:0007669"/>
    <property type="project" value="InterPro"/>
</dbReference>
<dbReference type="GO" id="GO:0004638">
    <property type="term" value="F:phosphoribosylaminoimidazole carboxylase activity"/>
    <property type="evidence" value="ECO:0007669"/>
    <property type="project" value="InterPro"/>
</dbReference>
<dbReference type="GO" id="GO:0006189">
    <property type="term" value="P:'de novo' IMP biosynthetic process"/>
    <property type="evidence" value="ECO:0007669"/>
    <property type="project" value="UniProtKB-UniRule"/>
</dbReference>
<dbReference type="FunFam" id="3.30.1490.20:FF:000015">
    <property type="entry name" value="N5-carboxyaminoimidazole ribonucleotide synthase"/>
    <property type="match status" value="1"/>
</dbReference>
<dbReference type="FunFam" id="3.40.50.20:FF:000016">
    <property type="entry name" value="N5-carboxyaminoimidazole ribonucleotide synthase"/>
    <property type="match status" value="1"/>
</dbReference>
<dbReference type="Gene3D" id="3.40.50.20">
    <property type="match status" value="1"/>
</dbReference>
<dbReference type="Gene3D" id="3.30.1490.20">
    <property type="entry name" value="ATP-grasp fold, A domain"/>
    <property type="match status" value="1"/>
</dbReference>
<dbReference type="Gene3D" id="3.30.470.20">
    <property type="entry name" value="ATP-grasp fold, B domain"/>
    <property type="match status" value="1"/>
</dbReference>
<dbReference type="HAMAP" id="MF_01928">
    <property type="entry name" value="PurK"/>
    <property type="match status" value="1"/>
</dbReference>
<dbReference type="InterPro" id="IPR011761">
    <property type="entry name" value="ATP-grasp"/>
</dbReference>
<dbReference type="InterPro" id="IPR003135">
    <property type="entry name" value="ATP-grasp_carboxylate-amine"/>
</dbReference>
<dbReference type="InterPro" id="IPR013815">
    <property type="entry name" value="ATP_grasp_subdomain_1"/>
</dbReference>
<dbReference type="InterPro" id="IPR016185">
    <property type="entry name" value="PreATP-grasp_dom_sf"/>
</dbReference>
<dbReference type="InterPro" id="IPR005875">
    <property type="entry name" value="PurK"/>
</dbReference>
<dbReference type="InterPro" id="IPR040686">
    <property type="entry name" value="PurK_C"/>
</dbReference>
<dbReference type="InterPro" id="IPR054350">
    <property type="entry name" value="PurT/PurK_preATP-grasp"/>
</dbReference>
<dbReference type="InterPro" id="IPR011054">
    <property type="entry name" value="Rudment_hybrid_motif"/>
</dbReference>
<dbReference type="NCBIfam" id="NF004675">
    <property type="entry name" value="PRK06019.1-1"/>
    <property type="match status" value="1"/>
</dbReference>
<dbReference type="NCBIfam" id="NF004676">
    <property type="entry name" value="PRK06019.1-2"/>
    <property type="match status" value="1"/>
</dbReference>
<dbReference type="NCBIfam" id="NF004679">
    <property type="entry name" value="PRK06019.1-5"/>
    <property type="match status" value="1"/>
</dbReference>
<dbReference type="NCBIfam" id="TIGR01161">
    <property type="entry name" value="purK"/>
    <property type="match status" value="1"/>
</dbReference>
<dbReference type="PANTHER" id="PTHR11609:SF5">
    <property type="entry name" value="PHOSPHORIBOSYLAMINOIMIDAZOLE CARBOXYLASE"/>
    <property type="match status" value="1"/>
</dbReference>
<dbReference type="PANTHER" id="PTHR11609">
    <property type="entry name" value="PURINE BIOSYNTHESIS PROTEIN 6/7, PUR6/7"/>
    <property type="match status" value="1"/>
</dbReference>
<dbReference type="Pfam" id="PF02222">
    <property type="entry name" value="ATP-grasp"/>
    <property type="match status" value="1"/>
</dbReference>
<dbReference type="Pfam" id="PF17769">
    <property type="entry name" value="PurK_C"/>
    <property type="match status" value="1"/>
</dbReference>
<dbReference type="Pfam" id="PF22660">
    <property type="entry name" value="RS_preATP-grasp-like"/>
    <property type="match status" value="1"/>
</dbReference>
<dbReference type="SUPFAM" id="SSF56059">
    <property type="entry name" value="Glutathione synthetase ATP-binding domain-like"/>
    <property type="match status" value="1"/>
</dbReference>
<dbReference type="SUPFAM" id="SSF52440">
    <property type="entry name" value="PreATP-grasp domain"/>
    <property type="match status" value="1"/>
</dbReference>
<dbReference type="SUPFAM" id="SSF51246">
    <property type="entry name" value="Rudiment single hybrid motif"/>
    <property type="match status" value="1"/>
</dbReference>
<dbReference type="PROSITE" id="PS50975">
    <property type="entry name" value="ATP_GRASP"/>
    <property type="match status" value="1"/>
</dbReference>
<proteinExistence type="evidence at protein level"/>
<organism>
    <name type="scientific">Staphylococcus aureus (strain N315)</name>
    <dbReference type="NCBI Taxonomy" id="158879"/>
    <lineage>
        <taxon>Bacteria</taxon>
        <taxon>Bacillati</taxon>
        <taxon>Bacillota</taxon>
        <taxon>Bacilli</taxon>
        <taxon>Bacillales</taxon>
        <taxon>Staphylococcaceae</taxon>
        <taxon>Staphylococcus</taxon>
    </lineage>
</organism>
<reference key="1">
    <citation type="journal article" date="2001" name="Lancet">
        <title>Whole genome sequencing of meticillin-resistant Staphylococcus aureus.</title>
        <authorList>
            <person name="Kuroda M."/>
            <person name="Ohta T."/>
            <person name="Uchiyama I."/>
            <person name="Baba T."/>
            <person name="Yuzawa H."/>
            <person name="Kobayashi I."/>
            <person name="Cui L."/>
            <person name="Oguchi A."/>
            <person name="Aoki K."/>
            <person name="Nagai Y."/>
            <person name="Lian J.-Q."/>
            <person name="Ito T."/>
            <person name="Kanamori M."/>
            <person name="Matsumaru H."/>
            <person name="Maruyama A."/>
            <person name="Murakami H."/>
            <person name="Hosoyama A."/>
            <person name="Mizutani-Ui Y."/>
            <person name="Takahashi N.K."/>
            <person name="Sawano T."/>
            <person name="Inoue R."/>
            <person name="Kaito C."/>
            <person name="Sekimizu K."/>
            <person name="Hirakawa H."/>
            <person name="Kuhara S."/>
            <person name="Goto S."/>
            <person name="Yabuzaki J."/>
            <person name="Kanehisa M."/>
            <person name="Yamashita A."/>
            <person name="Oshima K."/>
            <person name="Furuya K."/>
            <person name="Yoshino C."/>
            <person name="Shiba T."/>
            <person name="Hattori M."/>
            <person name="Ogasawara N."/>
            <person name="Hayashi H."/>
            <person name="Hiramatsu K."/>
        </authorList>
    </citation>
    <scope>NUCLEOTIDE SEQUENCE [LARGE SCALE GENOMIC DNA]</scope>
    <source>
        <strain>N315</strain>
    </source>
</reference>
<reference key="2">
    <citation type="submission" date="2007-10" db="UniProtKB">
        <title>Shotgun proteomic analysis of total and membrane protein extracts of S. aureus strain N315.</title>
        <authorList>
            <person name="Vaezzadeh A.R."/>
            <person name="Deshusses J."/>
            <person name="Lescuyer P."/>
            <person name="Hochstrasser D.F."/>
        </authorList>
    </citation>
    <scope>IDENTIFICATION BY MASS SPECTROMETRY [LARGE SCALE ANALYSIS]</scope>
    <source>
        <strain>N315</strain>
    </source>
</reference>
<evidence type="ECO:0000255" key="1">
    <source>
        <dbReference type="HAMAP-Rule" id="MF_01928"/>
    </source>
</evidence>